<feature type="chain" id="PRO_1000084349" description="Ribosome rescue factor SmrB">
    <location>
        <begin position="1"/>
        <end position="183"/>
    </location>
</feature>
<feature type="domain" description="Smr" evidence="1">
    <location>
        <begin position="98"/>
        <end position="173"/>
    </location>
</feature>
<keyword id="KW-0255">Endonuclease</keyword>
<keyword id="KW-0378">Hydrolase</keyword>
<keyword id="KW-0540">Nuclease</keyword>
<keyword id="KW-0694">RNA-binding</keyword>
<keyword id="KW-0699">rRNA-binding</keyword>
<dbReference type="EC" id="3.1.-.-" evidence="1"/>
<dbReference type="EMBL" id="CP000946">
    <property type="protein sequence ID" value="ACA76987.1"/>
    <property type="molecule type" value="Genomic_DNA"/>
</dbReference>
<dbReference type="RefSeq" id="WP_000730806.1">
    <property type="nucleotide sequence ID" value="NZ_MTFT01000028.1"/>
</dbReference>
<dbReference type="SMR" id="B1IXB4"/>
<dbReference type="GeneID" id="93774844"/>
<dbReference type="KEGG" id="ecl:EcolC_1321"/>
<dbReference type="HOGENOM" id="CLU_055978_4_0_6"/>
<dbReference type="GO" id="GO:0004521">
    <property type="term" value="F:RNA endonuclease activity"/>
    <property type="evidence" value="ECO:0007669"/>
    <property type="project" value="UniProtKB-UniRule"/>
</dbReference>
<dbReference type="GO" id="GO:0019843">
    <property type="term" value="F:rRNA binding"/>
    <property type="evidence" value="ECO:0007669"/>
    <property type="project" value="UniProtKB-UniRule"/>
</dbReference>
<dbReference type="GO" id="GO:0072344">
    <property type="term" value="P:rescue of stalled ribosome"/>
    <property type="evidence" value="ECO:0007669"/>
    <property type="project" value="UniProtKB-UniRule"/>
</dbReference>
<dbReference type="Gene3D" id="3.30.1370.110">
    <property type="match status" value="1"/>
</dbReference>
<dbReference type="HAMAP" id="MF_01042">
    <property type="entry name" value="SmrB"/>
    <property type="match status" value="1"/>
</dbReference>
<dbReference type="InterPro" id="IPR002625">
    <property type="entry name" value="Smr_dom"/>
</dbReference>
<dbReference type="InterPro" id="IPR036063">
    <property type="entry name" value="Smr_dom_sf"/>
</dbReference>
<dbReference type="InterPro" id="IPR022990">
    <property type="entry name" value="SmrB-like"/>
</dbReference>
<dbReference type="NCBIfam" id="NF003432">
    <property type="entry name" value="PRK04946.1"/>
    <property type="match status" value="1"/>
</dbReference>
<dbReference type="PANTHER" id="PTHR35562">
    <property type="entry name" value="DNA ENDONUCLEASE SMRA-RELATED"/>
    <property type="match status" value="1"/>
</dbReference>
<dbReference type="PANTHER" id="PTHR35562:SF1">
    <property type="entry name" value="UPF0115 PROTEIN YFCN"/>
    <property type="match status" value="1"/>
</dbReference>
<dbReference type="Pfam" id="PF01713">
    <property type="entry name" value="Smr"/>
    <property type="match status" value="1"/>
</dbReference>
<dbReference type="SMART" id="SM00463">
    <property type="entry name" value="SMR"/>
    <property type="match status" value="1"/>
</dbReference>
<dbReference type="SUPFAM" id="SSF160443">
    <property type="entry name" value="SMR domain-like"/>
    <property type="match status" value="1"/>
</dbReference>
<dbReference type="PROSITE" id="PS50828">
    <property type="entry name" value="SMR"/>
    <property type="match status" value="1"/>
</dbReference>
<comment type="function">
    <text evidence="1">Acts as a ribosome collision sensor. Detects stalled/collided disomes (pairs of ribosomes where the leading ribosome is stalled and a second ribosome has collided with it) and endonucleolytically cleaves mRNA at the 5' boundary of the stalled ribosome. Stalled/collided disomes form a new interface (primarily via the 30S subunits) that binds SmrB. Cleaved mRNA becomes available for tmRNA ligation, leading to ribosomal subunit dissociation and rescue of stalled ribosomes.</text>
</comment>
<comment type="subunit">
    <text evidence="1">Associates with collided ribosomes, but not with correctly translating polysomes.</text>
</comment>
<comment type="similarity">
    <text evidence="1">Belongs to the SmrB family.</text>
</comment>
<evidence type="ECO:0000255" key="1">
    <source>
        <dbReference type="HAMAP-Rule" id="MF_01042"/>
    </source>
</evidence>
<gene>
    <name evidence="1" type="primary">smrB</name>
    <name type="ordered locus">EcolC_1321</name>
</gene>
<reference key="1">
    <citation type="submission" date="2008-02" db="EMBL/GenBank/DDBJ databases">
        <title>Complete sequence of Escherichia coli C str. ATCC 8739.</title>
        <authorList>
            <person name="Copeland A."/>
            <person name="Lucas S."/>
            <person name="Lapidus A."/>
            <person name="Glavina del Rio T."/>
            <person name="Dalin E."/>
            <person name="Tice H."/>
            <person name="Bruce D."/>
            <person name="Goodwin L."/>
            <person name="Pitluck S."/>
            <person name="Kiss H."/>
            <person name="Brettin T."/>
            <person name="Detter J.C."/>
            <person name="Han C."/>
            <person name="Kuske C.R."/>
            <person name="Schmutz J."/>
            <person name="Larimer F."/>
            <person name="Land M."/>
            <person name="Hauser L."/>
            <person name="Kyrpides N."/>
            <person name="Mikhailova N."/>
            <person name="Ingram L."/>
            <person name="Richardson P."/>
        </authorList>
    </citation>
    <scope>NUCLEOTIDE SEQUENCE [LARGE SCALE GENOMIC DNA]</scope>
    <source>
        <strain>ATCC 8739 / DSM 1576 / NBRC 3972 / NCIMB 8545 / WDCM 00012 / Crooks</strain>
    </source>
</reference>
<organism>
    <name type="scientific">Escherichia coli (strain ATCC 8739 / DSM 1576 / NBRC 3972 / NCIMB 8545 / WDCM 00012 / Crooks)</name>
    <dbReference type="NCBI Taxonomy" id="481805"/>
    <lineage>
        <taxon>Bacteria</taxon>
        <taxon>Pseudomonadati</taxon>
        <taxon>Pseudomonadota</taxon>
        <taxon>Gammaproteobacteria</taxon>
        <taxon>Enterobacterales</taxon>
        <taxon>Enterobacteriaceae</taxon>
        <taxon>Escherichia</taxon>
    </lineage>
</organism>
<proteinExistence type="inferred from homology"/>
<sequence length="183" mass="21013">MKKKTTLSEEDQALFRQLMAGTRKIKQDTIVHRPQRKKISEVPVKRLIQEQADASHYFSDEFQPLLNTEGPVKYVRPDVSHFEAKKLRRGDYSPELFLDLHGLTQLQAKQELGALIAACRREHVFCACVMHGHGKHILKQQTPLWLAQHPHVMAFHQAPKEYGGDAALLVLIEVEEWLPPELP</sequence>
<accession>B1IXB4</accession>
<name>SMRB_ECOLC</name>
<protein>
    <recommendedName>
        <fullName evidence="1">Ribosome rescue factor SmrB</fullName>
        <ecNumber evidence="1">3.1.-.-</ecNumber>
    </recommendedName>
</protein>